<sequence>YAPSALVLTVGHGESAATAAPLRAVTLTCAPTASGTHPAADAACAELRAAHGDPSALAADDAVMCTREYAPVVVTVDGVWQGRRLSYERTFANECVKNAGSASVFTF</sequence>
<feature type="chain" id="PRO_0000208659" description="Subtilisin inhibitor-like protein 3">
    <location>
        <begin position="1"/>
        <end position="107"/>
    </location>
</feature>
<feature type="site" description="Reactive bond" evidence="1">
    <location>
        <begin position="67"/>
        <end position="68"/>
    </location>
</feature>
<feature type="disulfide bond" evidence="1">
    <location>
        <begin position="29"/>
        <end position="44"/>
    </location>
</feature>
<feature type="disulfide bond" evidence="1">
    <location>
        <begin position="65"/>
        <end position="95"/>
    </location>
</feature>
<accession>P29608</accession>
<accession>Q9R5B8</accession>
<protein>
    <recommendedName>
        <fullName>Subtilisin inhibitor-like protein 3</fullName>
        <shortName>SIL-3</shortName>
        <shortName>SIL3</shortName>
    </recommendedName>
</protein>
<reference key="1">
    <citation type="journal article" date="1994" name="Eur. J. Biochem.">
        <title>Comparative studies on the primary structures and inhibitory properties of subtilisin-trypsin inhibitors from Streptomyces.</title>
        <authorList>
            <person name="Taguchi S."/>
            <person name="Kojima S."/>
            <person name="Terabe M."/>
            <person name="Miura K."/>
            <person name="Momose H."/>
        </authorList>
    </citation>
    <scope>PROTEIN SEQUENCE</scope>
    <source>
        <strain>KCC S006</strain>
    </source>
</reference>
<reference key="2">
    <citation type="journal article" date="1992" name="FEMS Microbiol. Lett.">
        <title>Isolation and partial characterization of SSI-like protease inhibitors from Streptomyces.</title>
        <authorList>
            <person name="Taguchi S."/>
            <person name="Kojima S."/>
            <person name="Kumagai I."/>
            <person name="Ogawara H."/>
            <person name="Miura K."/>
            <person name="Momose H."/>
        </authorList>
    </citation>
    <scope>PROTEIN SEQUENCE OF 1-35</scope>
    <source>
        <strain>KCC S006</strain>
    </source>
</reference>
<reference key="3">
    <citation type="journal article" date="1993" name="Biosci. Biotechnol. Biochem.">
        <title>High frequency of SSI-like protease inhibitors among Streptomyces.</title>
        <authorList>
            <person name="Taguchi S."/>
            <person name="Kikuchi H."/>
            <person name="Kojima S."/>
            <person name="Kumagai I."/>
            <person name="Nakase T."/>
            <person name="Miura K."/>
            <person name="Momose H."/>
        </authorList>
    </citation>
    <scope>PROTEIN SEQUENCE OF 1-34</scope>
    <source>
        <strain>KCC S006</strain>
    </source>
</reference>
<proteinExistence type="evidence at protein level"/>
<evidence type="ECO:0000250" key="1"/>
<evidence type="ECO:0000305" key="2"/>
<comment type="function">
    <text>Inhibitor of subtilisin BPN' and trypsin.</text>
</comment>
<comment type="subunit">
    <text evidence="1">Homodimer.</text>
</comment>
<comment type="subcellular location">
    <subcellularLocation>
        <location>Secreted</location>
    </subcellularLocation>
</comment>
<comment type="similarity">
    <text evidence="2">Belongs to the protease inhibitor I16 (SSI) family.</text>
</comment>
<organism>
    <name type="scientific">Streptomyces coelicolor</name>
    <dbReference type="NCBI Taxonomy" id="1902"/>
    <lineage>
        <taxon>Bacteria</taxon>
        <taxon>Bacillati</taxon>
        <taxon>Actinomycetota</taxon>
        <taxon>Actinomycetes</taxon>
        <taxon>Kitasatosporales</taxon>
        <taxon>Streptomycetaceae</taxon>
        <taxon>Streptomyces</taxon>
        <taxon>Streptomyces albidoflavus group</taxon>
    </lineage>
</organism>
<dbReference type="PIR" id="PC1267">
    <property type="entry name" value="PC1267"/>
</dbReference>
<dbReference type="PIR" id="S42572">
    <property type="entry name" value="S42572"/>
</dbReference>
<dbReference type="SMR" id="P29608"/>
<dbReference type="GO" id="GO:0005576">
    <property type="term" value="C:extracellular region"/>
    <property type="evidence" value="ECO:0007669"/>
    <property type="project" value="UniProtKB-SubCell"/>
</dbReference>
<dbReference type="GO" id="GO:0004867">
    <property type="term" value="F:serine-type endopeptidase inhibitor activity"/>
    <property type="evidence" value="ECO:0007669"/>
    <property type="project" value="UniProtKB-UniRule"/>
</dbReference>
<dbReference type="Gene3D" id="3.30.350.10">
    <property type="entry name" value="Subtilisin inhibitor-like"/>
    <property type="match status" value="1"/>
</dbReference>
<dbReference type="HAMAP" id="MF_00778">
    <property type="entry name" value="SSI"/>
    <property type="match status" value="1"/>
</dbReference>
<dbReference type="InterPro" id="IPR000691">
    <property type="entry name" value="Prot_inh_I16_SSI"/>
</dbReference>
<dbReference type="InterPro" id="IPR020054">
    <property type="entry name" value="Prot_inh_SSI_I16_CS"/>
</dbReference>
<dbReference type="InterPro" id="IPR023549">
    <property type="entry name" value="Subtilisin_inhibitor"/>
</dbReference>
<dbReference type="InterPro" id="IPR036819">
    <property type="entry name" value="Subtilisin_inhibitor-like_sf"/>
</dbReference>
<dbReference type="Pfam" id="PF00720">
    <property type="entry name" value="SSI"/>
    <property type="match status" value="1"/>
</dbReference>
<dbReference type="PRINTS" id="PR00294">
    <property type="entry name" value="SSBTLNINHBTR"/>
</dbReference>
<dbReference type="SUPFAM" id="SSF55399">
    <property type="entry name" value="Subtilisin inhibitor"/>
    <property type="match status" value="1"/>
</dbReference>
<dbReference type="PROSITE" id="PS00999">
    <property type="entry name" value="SSI"/>
    <property type="match status" value="1"/>
</dbReference>
<keyword id="KW-0903">Direct protein sequencing</keyword>
<keyword id="KW-1015">Disulfide bond</keyword>
<keyword id="KW-0646">Protease inhibitor</keyword>
<keyword id="KW-0964">Secreted</keyword>
<keyword id="KW-0722">Serine protease inhibitor</keyword>
<name>SSI3_STRCH</name>